<proteinExistence type="inferred from homology"/>
<feature type="chain" id="PRO_0000082548" description="Ubiquitin-conjugating enzyme E2 6">
    <location>
        <begin position="1"/>
        <end position="246"/>
    </location>
</feature>
<feature type="topological domain" description="Cytoplasmic" evidence="2">
    <location>
        <begin position="1"/>
        <end position="224"/>
    </location>
</feature>
<feature type="transmembrane region" description="Helical" evidence="2">
    <location>
        <begin position="225"/>
        <end position="245"/>
    </location>
</feature>
<feature type="domain" description="UBC core" evidence="3">
    <location>
        <begin position="5"/>
        <end position="154"/>
    </location>
</feature>
<feature type="active site" description="Glycyl thioester intermediate" evidence="3">
    <location>
        <position position="87"/>
    </location>
</feature>
<keyword id="KW-0067">ATP-binding</keyword>
<keyword id="KW-0256">Endoplasmic reticulum</keyword>
<keyword id="KW-0472">Membrane</keyword>
<keyword id="KW-0547">Nucleotide-binding</keyword>
<keyword id="KW-1185">Reference proteome</keyword>
<keyword id="KW-0808">Transferase</keyword>
<keyword id="KW-0812">Transmembrane</keyword>
<keyword id="KW-1133">Transmembrane helix</keyword>
<keyword id="KW-0833">Ubl conjugation pathway</keyword>
<sequence length="246" mass="28400">MATKQAQKRLTKEYKMMVENPPPFIIARPNEENILEWHYVISGPPDTPYDGGQYHGTLTFPSDYPYKPPAIRMITPNGRFKENTRLCLSMSDYHPDTWNPGWSVATILNGLLSFMTGDESTTGSITTTQQEKKILAKKSMYYNTFNSTRFKLVFPEIVEKNITELQRRKQEEKDMSMFEKKEDPLVKAAREKAIEVKDIVNPEDRIRAEQALKELEKQHNDKPNGSSSMFYIGVALFLFLVGLFMK</sequence>
<evidence type="ECO:0000250" key="1">
    <source>
        <dbReference type="UniProtKB" id="Q5VVX9"/>
    </source>
</evidence>
<evidence type="ECO:0000255" key="2"/>
<evidence type="ECO:0000255" key="3">
    <source>
        <dbReference type="PROSITE-ProRule" id="PRU00388"/>
    </source>
</evidence>
<gene>
    <name type="primary">UBC6</name>
    <name type="ordered locus">CAGL0I05478g</name>
</gene>
<name>UBC6_CANGA</name>
<organism>
    <name type="scientific">Candida glabrata (strain ATCC 2001 / BCRC 20586 / JCM 3761 / NBRC 0622 / NRRL Y-65 / CBS 138)</name>
    <name type="common">Yeast</name>
    <name type="synonym">Nakaseomyces glabratus</name>
    <dbReference type="NCBI Taxonomy" id="284593"/>
    <lineage>
        <taxon>Eukaryota</taxon>
        <taxon>Fungi</taxon>
        <taxon>Dikarya</taxon>
        <taxon>Ascomycota</taxon>
        <taxon>Saccharomycotina</taxon>
        <taxon>Saccharomycetes</taxon>
        <taxon>Saccharomycetales</taxon>
        <taxon>Saccharomycetaceae</taxon>
        <taxon>Nakaseomyces</taxon>
    </lineage>
</organism>
<reference key="1">
    <citation type="journal article" date="2004" name="Nature">
        <title>Genome evolution in yeasts.</title>
        <authorList>
            <person name="Dujon B."/>
            <person name="Sherman D."/>
            <person name="Fischer G."/>
            <person name="Durrens P."/>
            <person name="Casaregola S."/>
            <person name="Lafontaine I."/>
            <person name="de Montigny J."/>
            <person name="Marck C."/>
            <person name="Neuveglise C."/>
            <person name="Talla E."/>
            <person name="Goffard N."/>
            <person name="Frangeul L."/>
            <person name="Aigle M."/>
            <person name="Anthouard V."/>
            <person name="Babour A."/>
            <person name="Barbe V."/>
            <person name="Barnay S."/>
            <person name="Blanchin S."/>
            <person name="Beckerich J.-M."/>
            <person name="Beyne E."/>
            <person name="Bleykasten C."/>
            <person name="Boisrame A."/>
            <person name="Boyer J."/>
            <person name="Cattolico L."/>
            <person name="Confanioleri F."/>
            <person name="de Daruvar A."/>
            <person name="Despons L."/>
            <person name="Fabre E."/>
            <person name="Fairhead C."/>
            <person name="Ferry-Dumazet H."/>
            <person name="Groppi A."/>
            <person name="Hantraye F."/>
            <person name="Hennequin C."/>
            <person name="Jauniaux N."/>
            <person name="Joyet P."/>
            <person name="Kachouri R."/>
            <person name="Kerrest A."/>
            <person name="Koszul R."/>
            <person name="Lemaire M."/>
            <person name="Lesur I."/>
            <person name="Ma L."/>
            <person name="Muller H."/>
            <person name="Nicaud J.-M."/>
            <person name="Nikolski M."/>
            <person name="Oztas S."/>
            <person name="Ozier-Kalogeropoulos O."/>
            <person name="Pellenz S."/>
            <person name="Potier S."/>
            <person name="Richard G.-F."/>
            <person name="Straub M.-L."/>
            <person name="Suleau A."/>
            <person name="Swennen D."/>
            <person name="Tekaia F."/>
            <person name="Wesolowski-Louvel M."/>
            <person name="Westhof E."/>
            <person name="Wirth B."/>
            <person name="Zeniou-Meyer M."/>
            <person name="Zivanovic Y."/>
            <person name="Bolotin-Fukuhara M."/>
            <person name="Thierry A."/>
            <person name="Bouchier C."/>
            <person name="Caudron B."/>
            <person name="Scarpelli C."/>
            <person name="Gaillardin C."/>
            <person name="Weissenbach J."/>
            <person name="Wincker P."/>
            <person name="Souciet J.-L."/>
        </authorList>
    </citation>
    <scope>NUCLEOTIDE SEQUENCE [LARGE SCALE GENOMIC DNA]</scope>
    <source>
        <strain>ATCC 2001 / BCRC 20586 / JCM 3761 / NBRC 0622 / NRRL Y-65 / CBS 138</strain>
    </source>
</reference>
<dbReference type="EC" id="2.3.2.23"/>
<dbReference type="EMBL" id="CR380955">
    <property type="protein sequence ID" value="CAG60424.1"/>
    <property type="molecule type" value="Genomic_DNA"/>
</dbReference>
<dbReference type="RefSeq" id="XP_447487.1">
    <property type="nucleotide sequence ID" value="XM_447487.1"/>
</dbReference>
<dbReference type="SMR" id="Q6FQK7"/>
<dbReference type="FunCoup" id="Q6FQK7">
    <property type="interactions" value="1036"/>
</dbReference>
<dbReference type="STRING" id="284593.Q6FQK7"/>
<dbReference type="EnsemblFungi" id="CAGL0I05478g-T">
    <property type="protein sequence ID" value="CAGL0I05478g-T-p1"/>
    <property type="gene ID" value="CAGL0I05478g"/>
</dbReference>
<dbReference type="KEGG" id="cgr:2889269"/>
<dbReference type="CGD" id="CAL0132568">
    <property type="gene designation" value="CAGL0I05478g"/>
</dbReference>
<dbReference type="VEuPathDB" id="FungiDB:CAGL0I05478g"/>
<dbReference type="eggNOG" id="KOG0894">
    <property type="taxonomic scope" value="Eukaryota"/>
</dbReference>
<dbReference type="HOGENOM" id="CLU_041481_1_0_1"/>
<dbReference type="InParanoid" id="Q6FQK7"/>
<dbReference type="OMA" id="GWSVATI"/>
<dbReference type="UniPathway" id="UPA00143"/>
<dbReference type="Proteomes" id="UP000002428">
    <property type="component" value="Chromosome I"/>
</dbReference>
<dbReference type="GO" id="GO:0005789">
    <property type="term" value="C:endoplasmic reticulum membrane"/>
    <property type="evidence" value="ECO:0007669"/>
    <property type="project" value="UniProtKB-SubCell"/>
</dbReference>
<dbReference type="GO" id="GO:0005524">
    <property type="term" value="F:ATP binding"/>
    <property type="evidence" value="ECO:0007669"/>
    <property type="project" value="UniProtKB-KW"/>
</dbReference>
<dbReference type="GO" id="GO:0061631">
    <property type="term" value="F:ubiquitin conjugating enzyme activity"/>
    <property type="evidence" value="ECO:0007669"/>
    <property type="project" value="UniProtKB-EC"/>
</dbReference>
<dbReference type="GO" id="GO:0036503">
    <property type="term" value="P:ERAD pathway"/>
    <property type="evidence" value="ECO:0007669"/>
    <property type="project" value="EnsemblFungi"/>
</dbReference>
<dbReference type="GO" id="GO:0006513">
    <property type="term" value="P:protein monoubiquitination"/>
    <property type="evidence" value="ECO:0007669"/>
    <property type="project" value="EnsemblFungi"/>
</dbReference>
<dbReference type="GO" id="GO:0000209">
    <property type="term" value="P:protein polyubiquitination"/>
    <property type="evidence" value="ECO:0007669"/>
    <property type="project" value="EnsemblFungi"/>
</dbReference>
<dbReference type="CDD" id="cd23799">
    <property type="entry name" value="UBCc_UBE2J"/>
    <property type="match status" value="1"/>
</dbReference>
<dbReference type="FunFam" id="3.10.110.10:FF:000023">
    <property type="entry name" value="Ubiquitin-conjugating enzyme E2 J2"/>
    <property type="match status" value="1"/>
</dbReference>
<dbReference type="Gene3D" id="3.10.110.10">
    <property type="entry name" value="Ubiquitin Conjugating Enzyme"/>
    <property type="match status" value="1"/>
</dbReference>
<dbReference type="InterPro" id="IPR050113">
    <property type="entry name" value="Ub_conjugating_enzyme"/>
</dbReference>
<dbReference type="InterPro" id="IPR000608">
    <property type="entry name" value="UBQ-conjugat_E2_core"/>
</dbReference>
<dbReference type="InterPro" id="IPR016135">
    <property type="entry name" value="UBQ-conjugating_enzyme/RWD"/>
</dbReference>
<dbReference type="PANTHER" id="PTHR24067">
    <property type="entry name" value="UBIQUITIN-CONJUGATING ENZYME E2"/>
    <property type="match status" value="1"/>
</dbReference>
<dbReference type="Pfam" id="PF00179">
    <property type="entry name" value="UQ_con"/>
    <property type="match status" value="1"/>
</dbReference>
<dbReference type="SMART" id="SM00212">
    <property type="entry name" value="UBCc"/>
    <property type="match status" value="1"/>
</dbReference>
<dbReference type="SUPFAM" id="SSF54495">
    <property type="entry name" value="UBC-like"/>
    <property type="match status" value="1"/>
</dbReference>
<dbReference type="PROSITE" id="PS50127">
    <property type="entry name" value="UBC_2"/>
    <property type="match status" value="1"/>
</dbReference>
<accession>Q6FQK7</accession>
<comment type="function">
    <text evidence="3">Catalyzes the covalent attachment of ubiquitin to other proteins. Functions in degradation of misfolded or regulated proteins localized in the endoplasmic reticulum (ER) lumen or membrane via the ubiquitin-proteasome system. Cognate E2 conjugating enzyme for the DOA10 ubiquitin ligase complex, which is part of the ERAD-C pathway responsible for the rapid degradation of membrane proteins with misfolded cytoplasmic domains.</text>
</comment>
<comment type="catalytic activity">
    <reaction evidence="3">
        <text>S-ubiquitinyl-[E1 ubiquitin-activating enzyme]-L-cysteine + [E2 ubiquitin-conjugating enzyme]-L-cysteine = [E1 ubiquitin-activating enzyme]-L-cysteine + S-ubiquitinyl-[E2 ubiquitin-conjugating enzyme]-L-cysteine.</text>
        <dbReference type="EC" id="2.3.2.23"/>
    </reaction>
</comment>
<comment type="pathway">
    <text evidence="3">Protein modification; protein ubiquitination.</text>
</comment>
<comment type="subcellular location">
    <subcellularLocation>
        <location evidence="1">Endoplasmic reticulum membrane</location>
    </subcellularLocation>
</comment>
<comment type="similarity">
    <text evidence="3">Belongs to the ubiquitin-conjugating enzyme family.</text>
</comment>
<protein>
    <recommendedName>
        <fullName>Ubiquitin-conjugating enzyme E2 6</fullName>
        <ecNumber>2.3.2.23</ecNumber>
    </recommendedName>
    <alternativeName>
        <fullName>E2 ubiquitin-conjugating enzyme 6</fullName>
    </alternativeName>
    <alternativeName>
        <fullName>Ubiquitin carrier protein UBC6</fullName>
    </alternativeName>
    <alternativeName>
        <fullName>Ubiquitin-protein ligase UBC6</fullName>
    </alternativeName>
</protein>